<organism>
    <name type="scientific">Methylocella silvestris (strain DSM 15510 / CIP 108128 / LMG 27833 / NCIMB 13906 / BL2)</name>
    <dbReference type="NCBI Taxonomy" id="395965"/>
    <lineage>
        <taxon>Bacteria</taxon>
        <taxon>Pseudomonadati</taxon>
        <taxon>Pseudomonadota</taxon>
        <taxon>Alphaproteobacteria</taxon>
        <taxon>Hyphomicrobiales</taxon>
        <taxon>Beijerinckiaceae</taxon>
        <taxon>Methylocella</taxon>
    </lineage>
</organism>
<feature type="chain" id="PRO_1000196610" description="5'-nucleotidase SurE">
    <location>
        <begin position="1"/>
        <end position="252"/>
    </location>
</feature>
<feature type="binding site" evidence="1">
    <location>
        <position position="8"/>
    </location>
    <ligand>
        <name>a divalent metal cation</name>
        <dbReference type="ChEBI" id="CHEBI:60240"/>
    </ligand>
</feature>
<feature type="binding site" evidence="1">
    <location>
        <position position="9"/>
    </location>
    <ligand>
        <name>a divalent metal cation</name>
        <dbReference type="ChEBI" id="CHEBI:60240"/>
    </ligand>
</feature>
<feature type="binding site" evidence="1">
    <location>
        <position position="40"/>
    </location>
    <ligand>
        <name>a divalent metal cation</name>
        <dbReference type="ChEBI" id="CHEBI:60240"/>
    </ligand>
</feature>
<feature type="binding site" evidence="1">
    <location>
        <position position="93"/>
    </location>
    <ligand>
        <name>a divalent metal cation</name>
        <dbReference type="ChEBI" id="CHEBI:60240"/>
    </ligand>
</feature>
<reference key="1">
    <citation type="journal article" date="2010" name="J. Bacteriol.">
        <title>Complete genome sequence of the aerobic facultative methanotroph Methylocella silvestris BL2.</title>
        <authorList>
            <person name="Chen Y."/>
            <person name="Crombie A."/>
            <person name="Rahman M.T."/>
            <person name="Dedysh S.N."/>
            <person name="Liesack W."/>
            <person name="Stott M.B."/>
            <person name="Alam M."/>
            <person name="Theisen A.R."/>
            <person name="Murrell J.C."/>
            <person name="Dunfield P.F."/>
        </authorList>
    </citation>
    <scope>NUCLEOTIDE SEQUENCE [LARGE SCALE GENOMIC DNA]</scope>
    <source>
        <strain>DSM 15510 / CIP 108128 / LMG 27833 / NCIMB 13906 / BL2</strain>
    </source>
</reference>
<gene>
    <name evidence="1" type="primary">surE</name>
    <name type="ordered locus">Msil_1345</name>
</gene>
<accession>B8ERC6</accession>
<keyword id="KW-0963">Cytoplasm</keyword>
<keyword id="KW-0378">Hydrolase</keyword>
<keyword id="KW-0479">Metal-binding</keyword>
<keyword id="KW-0547">Nucleotide-binding</keyword>
<keyword id="KW-1185">Reference proteome</keyword>
<sequence length="252" mass="26872">MRILVTNDDGVHAPGLRVLEEIAAALSDDVYVVAPESDQSGVAHSLSLNDPLRLRRISERRYAVKGTPTDCVIMGVRRILDGREPDVVLSGVNSGQNVAEDVIYSGTVAGAMEGAILGIPAIALSQAYGRAGREKAFWSCAQAHAPGLIEKILATGVPANTVVNVNFPDCPPDAVEGVAVTAQGRRGYLVNVDARSDGRGNPYYWIAFDRPFSEPGKGTDVEALAHNRISVTPLRLDITDTPTLTRYAQALL</sequence>
<comment type="function">
    <text evidence="1">Nucleotidase that shows phosphatase activity on nucleoside 5'-monophosphates.</text>
</comment>
<comment type="catalytic activity">
    <reaction evidence="1">
        <text>a ribonucleoside 5'-phosphate + H2O = a ribonucleoside + phosphate</text>
        <dbReference type="Rhea" id="RHEA:12484"/>
        <dbReference type="ChEBI" id="CHEBI:15377"/>
        <dbReference type="ChEBI" id="CHEBI:18254"/>
        <dbReference type="ChEBI" id="CHEBI:43474"/>
        <dbReference type="ChEBI" id="CHEBI:58043"/>
        <dbReference type="EC" id="3.1.3.5"/>
    </reaction>
</comment>
<comment type="cofactor">
    <cofactor evidence="1">
        <name>a divalent metal cation</name>
        <dbReference type="ChEBI" id="CHEBI:60240"/>
    </cofactor>
    <text evidence="1">Binds 1 divalent metal cation per subunit.</text>
</comment>
<comment type="subcellular location">
    <subcellularLocation>
        <location evidence="1">Cytoplasm</location>
    </subcellularLocation>
</comment>
<comment type="similarity">
    <text evidence="1">Belongs to the SurE nucleotidase family.</text>
</comment>
<evidence type="ECO:0000255" key="1">
    <source>
        <dbReference type="HAMAP-Rule" id="MF_00060"/>
    </source>
</evidence>
<dbReference type="EC" id="3.1.3.5" evidence="1"/>
<dbReference type="EMBL" id="CP001280">
    <property type="protein sequence ID" value="ACK50310.1"/>
    <property type="molecule type" value="Genomic_DNA"/>
</dbReference>
<dbReference type="RefSeq" id="WP_012590380.1">
    <property type="nucleotide sequence ID" value="NC_011666.1"/>
</dbReference>
<dbReference type="SMR" id="B8ERC6"/>
<dbReference type="STRING" id="395965.Msil_1345"/>
<dbReference type="KEGG" id="msl:Msil_1345"/>
<dbReference type="eggNOG" id="COG0496">
    <property type="taxonomic scope" value="Bacteria"/>
</dbReference>
<dbReference type="HOGENOM" id="CLU_045192_1_2_5"/>
<dbReference type="OrthoDB" id="9780815at2"/>
<dbReference type="Proteomes" id="UP000002257">
    <property type="component" value="Chromosome"/>
</dbReference>
<dbReference type="GO" id="GO:0005737">
    <property type="term" value="C:cytoplasm"/>
    <property type="evidence" value="ECO:0007669"/>
    <property type="project" value="UniProtKB-SubCell"/>
</dbReference>
<dbReference type="GO" id="GO:0008254">
    <property type="term" value="F:3'-nucleotidase activity"/>
    <property type="evidence" value="ECO:0007669"/>
    <property type="project" value="TreeGrafter"/>
</dbReference>
<dbReference type="GO" id="GO:0008253">
    <property type="term" value="F:5'-nucleotidase activity"/>
    <property type="evidence" value="ECO:0007669"/>
    <property type="project" value="UniProtKB-UniRule"/>
</dbReference>
<dbReference type="GO" id="GO:0004309">
    <property type="term" value="F:exopolyphosphatase activity"/>
    <property type="evidence" value="ECO:0007669"/>
    <property type="project" value="TreeGrafter"/>
</dbReference>
<dbReference type="GO" id="GO:0046872">
    <property type="term" value="F:metal ion binding"/>
    <property type="evidence" value="ECO:0007669"/>
    <property type="project" value="UniProtKB-UniRule"/>
</dbReference>
<dbReference type="GO" id="GO:0000166">
    <property type="term" value="F:nucleotide binding"/>
    <property type="evidence" value="ECO:0007669"/>
    <property type="project" value="UniProtKB-KW"/>
</dbReference>
<dbReference type="FunFam" id="3.40.1210.10:FF:000001">
    <property type="entry name" value="5'/3'-nucleotidase SurE"/>
    <property type="match status" value="1"/>
</dbReference>
<dbReference type="Gene3D" id="3.40.1210.10">
    <property type="entry name" value="Survival protein SurE-like phosphatase/nucleotidase"/>
    <property type="match status" value="1"/>
</dbReference>
<dbReference type="HAMAP" id="MF_00060">
    <property type="entry name" value="SurE"/>
    <property type="match status" value="1"/>
</dbReference>
<dbReference type="InterPro" id="IPR030048">
    <property type="entry name" value="SurE"/>
</dbReference>
<dbReference type="InterPro" id="IPR002828">
    <property type="entry name" value="SurE-like_Pase/nucleotidase"/>
</dbReference>
<dbReference type="InterPro" id="IPR036523">
    <property type="entry name" value="SurE-like_sf"/>
</dbReference>
<dbReference type="NCBIfam" id="NF001490">
    <property type="entry name" value="PRK00346.1-4"/>
    <property type="match status" value="1"/>
</dbReference>
<dbReference type="NCBIfam" id="TIGR00087">
    <property type="entry name" value="surE"/>
    <property type="match status" value="1"/>
</dbReference>
<dbReference type="PANTHER" id="PTHR30457">
    <property type="entry name" value="5'-NUCLEOTIDASE SURE"/>
    <property type="match status" value="1"/>
</dbReference>
<dbReference type="PANTHER" id="PTHR30457:SF12">
    <property type="entry name" value="5'_3'-NUCLEOTIDASE SURE"/>
    <property type="match status" value="1"/>
</dbReference>
<dbReference type="Pfam" id="PF01975">
    <property type="entry name" value="SurE"/>
    <property type="match status" value="1"/>
</dbReference>
<dbReference type="SUPFAM" id="SSF64167">
    <property type="entry name" value="SurE-like"/>
    <property type="match status" value="1"/>
</dbReference>
<proteinExistence type="inferred from homology"/>
<name>SURE_METSB</name>
<protein>
    <recommendedName>
        <fullName evidence="1">5'-nucleotidase SurE</fullName>
        <ecNumber evidence="1">3.1.3.5</ecNumber>
    </recommendedName>
    <alternativeName>
        <fullName evidence="1">Nucleoside 5'-monophosphate phosphohydrolase</fullName>
    </alternativeName>
</protein>